<reference key="1">
    <citation type="journal article" date="1992" name="Mol. Biochem. Parasitol.">
        <title>Molecular analysis of Plasmodium falciparum hexokinase.</title>
        <authorList>
            <person name="Olafsson P."/>
            <person name="Matile H."/>
            <person name="Cesta U."/>
        </authorList>
    </citation>
    <scope>NUCLEOTIDE SEQUENCE [GENOMIC DNA]</scope>
</reference>
<organism>
    <name type="scientific">Plasmodium falciparum</name>
    <dbReference type="NCBI Taxonomy" id="5833"/>
    <lineage>
        <taxon>Eukaryota</taxon>
        <taxon>Sar</taxon>
        <taxon>Alveolata</taxon>
        <taxon>Apicomplexa</taxon>
        <taxon>Aconoidasida</taxon>
        <taxon>Haemosporida</taxon>
        <taxon>Plasmodiidae</taxon>
        <taxon>Plasmodium</taxon>
        <taxon>Plasmodium (Laverania)</taxon>
    </lineage>
</organism>
<dbReference type="EC" id="2.7.1.1" evidence="1"/>
<dbReference type="EMBL" id="M92054">
    <property type="protein sequence ID" value="AAA29613.1"/>
    <property type="molecule type" value="Genomic_DNA"/>
</dbReference>
<dbReference type="PIR" id="A48457">
    <property type="entry name" value="A48457"/>
</dbReference>
<dbReference type="SMR" id="Q02155"/>
<dbReference type="DrugBank" id="DB11638">
    <property type="generic name" value="Artenimol"/>
</dbReference>
<dbReference type="VEuPathDB" id="PlasmoDB:PF3D7_0624000"/>
<dbReference type="VEuPathDB" id="PlasmoDB:Pf7G8-2_000176400"/>
<dbReference type="VEuPathDB" id="PlasmoDB:Pf7G8_060029000"/>
<dbReference type="VEuPathDB" id="PlasmoDB:PfCD01_060029400"/>
<dbReference type="VEuPathDB" id="PlasmoDB:PfDd2_060028700"/>
<dbReference type="VEuPathDB" id="PlasmoDB:PfGA01_060029000"/>
<dbReference type="VEuPathDB" id="PlasmoDB:PfGB4_060028500"/>
<dbReference type="VEuPathDB" id="PlasmoDB:PfGN01_060029700"/>
<dbReference type="VEuPathDB" id="PlasmoDB:PfHB3_060028200"/>
<dbReference type="VEuPathDB" id="PlasmoDB:PfIT_060027800"/>
<dbReference type="VEuPathDB" id="PlasmoDB:PfKE01_060030100"/>
<dbReference type="VEuPathDB" id="PlasmoDB:PfKH01_060031000"/>
<dbReference type="VEuPathDB" id="PlasmoDB:PfKH02_060030500"/>
<dbReference type="VEuPathDB" id="PlasmoDB:PfML01_060027800"/>
<dbReference type="VEuPathDB" id="PlasmoDB:PfNF135_060028200"/>
<dbReference type="VEuPathDB" id="PlasmoDB:PfNF166_060028500"/>
<dbReference type="VEuPathDB" id="PlasmoDB:PfNF54_060029000"/>
<dbReference type="VEuPathDB" id="PlasmoDB:PfSD01_060027900"/>
<dbReference type="VEuPathDB" id="PlasmoDB:PfSN01_060028900"/>
<dbReference type="VEuPathDB" id="PlasmoDB:PfTG01_060029300"/>
<dbReference type="BRENDA" id="2.7.1.1">
    <property type="organism ID" value="4889"/>
</dbReference>
<dbReference type="SABIO-RK" id="Q02155"/>
<dbReference type="UniPathway" id="UPA00109">
    <property type="reaction ID" value="UER00180"/>
</dbReference>
<dbReference type="UniPathway" id="UPA00242"/>
<dbReference type="GO" id="GO:0005829">
    <property type="term" value="C:cytosol"/>
    <property type="evidence" value="ECO:0007669"/>
    <property type="project" value="TreeGrafter"/>
</dbReference>
<dbReference type="GO" id="GO:0005739">
    <property type="term" value="C:mitochondrion"/>
    <property type="evidence" value="ECO:0007669"/>
    <property type="project" value="TreeGrafter"/>
</dbReference>
<dbReference type="GO" id="GO:0005524">
    <property type="term" value="F:ATP binding"/>
    <property type="evidence" value="ECO:0007669"/>
    <property type="project" value="UniProtKB-KW"/>
</dbReference>
<dbReference type="GO" id="GO:0005536">
    <property type="term" value="F:D-glucose binding"/>
    <property type="evidence" value="ECO:0007669"/>
    <property type="project" value="InterPro"/>
</dbReference>
<dbReference type="GO" id="GO:0008865">
    <property type="term" value="F:fructokinase activity"/>
    <property type="evidence" value="ECO:0007669"/>
    <property type="project" value="TreeGrafter"/>
</dbReference>
<dbReference type="GO" id="GO:0004340">
    <property type="term" value="F:glucokinase activity"/>
    <property type="evidence" value="ECO:0007669"/>
    <property type="project" value="TreeGrafter"/>
</dbReference>
<dbReference type="GO" id="GO:0019158">
    <property type="term" value="F:mannokinase activity"/>
    <property type="evidence" value="ECO:0007669"/>
    <property type="project" value="RHEA"/>
</dbReference>
<dbReference type="GO" id="GO:0006006">
    <property type="term" value="P:glucose metabolic process"/>
    <property type="evidence" value="ECO:0007669"/>
    <property type="project" value="TreeGrafter"/>
</dbReference>
<dbReference type="GO" id="GO:0006096">
    <property type="term" value="P:glycolytic process"/>
    <property type="evidence" value="ECO:0007669"/>
    <property type="project" value="UniProtKB-UniPathway"/>
</dbReference>
<dbReference type="GO" id="GO:0001678">
    <property type="term" value="P:intracellular glucose homeostasis"/>
    <property type="evidence" value="ECO:0007669"/>
    <property type="project" value="InterPro"/>
</dbReference>
<dbReference type="CDD" id="cd24000">
    <property type="entry name" value="ASKHA_NBD_HK"/>
    <property type="match status" value="1"/>
</dbReference>
<dbReference type="Gene3D" id="3.30.420.40">
    <property type="match status" value="1"/>
</dbReference>
<dbReference type="Gene3D" id="3.40.367.20">
    <property type="match status" value="1"/>
</dbReference>
<dbReference type="InterPro" id="IPR043129">
    <property type="entry name" value="ATPase_NBD"/>
</dbReference>
<dbReference type="InterPro" id="IPR001312">
    <property type="entry name" value="Hexokinase"/>
</dbReference>
<dbReference type="InterPro" id="IPR019807">
    <property type="entry name" value="Hexokinase_BS"/>
</dbReference>
<dbReference type="InterPro" id="IPR022673">
    <property type="entry name" value="Hexokinase_C"/>
</dbReference>
<dbReference type="InterPro" id="IPR022672">
    <property type="entry name" value="Hexokinase_N"/>
</dbReference>
<dbReference type="PANTHER" id="PTHR19443">
    <property type="entry name" value="HEXOKINASE"/>
    <property type="match status" value="1"/>
</dbReference>
<dbReference type="PANTHER" id="PTHR19443:SF16">
    <property type="entry name" value="HEXOKINASE TYPE 1-RELATED"/>
    <property type="match status" value="1"/>
</dbReference>
<dbReference type="Pfam" id="PF00349">
    <property type="entry name" value="Hexokinase_1"/>
    <property type="match status" value="1"/>
</dbReference>
<dbReference type="Pfam" id="PF03727">
    <property type="entry name" value="Hexokinase_2"/>
    <property type="match status" value="1"/>
</dbReference>
<dbReference type="PRINTS" id="PR00475">
    <property type="entry name" value="HEXOKINASE"/>
</dbReference>
<dbReference type="SUPFAM" id="SSF53067">
    <property type="entry name" value="Actin-like ATPase domain"/>
    <property type="match status" value="2"/>
</dbReference>
<dbReference type="PROSITE" id="PS00378">
    <property type="entry name" value="HEXOKINASE_1"/>
    <property type="match status" value="1"/>
</dbReference>
<dbReference type="PROSITE" id="PS51748">
    <property type="entry name" value="HEXOKINASE_2"/>
    <property type="match status" value="1"/>
</dbReference>
<accession>Q02155</accession>
<comment type="function">
    <text evidence="1">Catalyzes the phosphorylation of various hexoses to hexose 6-phosphate.</text>
</comment>
<comment type="catalytic activity">
    <reaction evidence="1 3">
        <text>a D-hexose + ATP = a D-hexose 6-phosphate + ADP + H(+)</text>
        <dbReference type="Rhea" id="RHEA:22740"/>
        <dbReference type="ChEBI" id="CHEBI:4194"/>
        <dbReference type="ChEBI" id="CHEBI:15378"/>
        <dbReference type="ChEBI" id="CHEBI:30616"/>
        <dbReference type="ChEBI" id="CHEBI:229467"/>
        <dbReference type="ChEBI" id="CHEBI:456216"/>
        <dbReference type="EC" id="2.7.1.1"/>
    </reaction>
    <physiologicalReaction direction="left-to-right" evidence="1">
        <dbReference type="Rhea" id="RHEA:22741"/>
    </physiologicalReaction>
</comment>
<comment type="catalytic activity">
    <reaction evidence="1">
        <text>D-mannose + ATP = D-mannose 6-phosphate + ADP + H(+)</text>
        <dbReference type="Rhea" id="RHEA:11028"/>
        <dbReference type="ChEBI" id="CHEBI:4208"/>
        <dbReference type="ChEBI" id="CHEBI:15378"/>
        <dbReference type="ChEBI" id="CHEBI:30616"/>
        <dbReference type="ChEBI" id="CHEBI:58735"/>
        <dbReference type="ChEBI" id="CHEBI:456216"/>
        <dbReference type="EC" id="2.7.1.1"/>
    </reaction>
    <physiologicalReaction direction="left-to-right" evidence="1">
        <dbReference type="Rhea" id="RHEA:11029"/>
    </physiologicalReaction>
</comment>
<comment type="catalytic activity">
    <reaction evidence="1">
        <text>D-fructose + ATP = D-fructose 6-phosphate + ADP + H(+)</text>
        <dbReference type="Rhea" id="RHEA:16125"/>
        <dbReference type="ChEBI" id="CHEBI:15378"/>
        <dbReference type="ChEBI" id="CHEBI:30616"/>
        <dbReference type="ChEBI" id="CHEBI:37721"/>
        <dbReference type="ChEBI" id="CHEBI:61527"/>
        <dbReference type="ChEBI" id="CHEBI:456216"/>
        <dbReference type="EC" id="2.7.1.1"/>
    </reaction>
    <physiologicalReaction direction="left-to-right" evidence="1">
        <dbReference type="Rhea" id="RHEA:16126"/>
    </physiologicalReaction>
</comment>
<comment type="catalytic activity">
    <reaction evidence="1">
        <text>D-glucose + ATP = D-glucose 6-phosphate + ADP + H(+)</text>
        <dbReference type="Rhea" id="RHEA:17825"/>
        <dbReference type="ChEBI" id="CHEBI:4167"/>
        <dbReference type="ChEBI" id="CHEBI:15378"/>
        <dbReference type="ChEBI" id="CHEBI:30616"/>
        <dbReference type="ChEBI" id="CHEBI:61548"/>
        <dbReference type="ChEBI" id="CHEBI:456216"/>
        <dbReference type="EC" id="2.7.1.1"/>
    </reaction>
    <physiologicalReaction direction="left-to-right" evidence="1">
        <dbReference type="Rhea" id="RHEA:17826"/>
    </physiologicalReaction>
</comment>
<comment type="pathway">
    <text evidence="1">Carbohydrate metabolism; hexose metabolism.</text>
</comment>
<comment type="pathway">
    <text evidence="1">Carbohydrate degradation; glycolysis; D-glyceraldehyde 3-phosphate and glycerone phosphate from D-glucose: step 1/4.</text>
</comment>
<comment type="similarity">
    <text evidence="3 4">Belongs to the hexokinase family.</text>
</comment>
<keyword id="KW-0067">ATP-binding</keyword>
<keyword id="KW-0324">Glycolysis</keyword>
<keyword id="KW-0418">Kinase</keyword>
<keyword id="KW-0547">Nucleotide-binding</keyword>
<keyword id="KW-0808">Transferase</keyword>
<proteinExistence type="inferred from homology"/>
<evidence type="ECO:0000250" key="1">
    <source>
        <dbReference type="UniProtKB" id="A0A0K0JFP3"/>
    </source>
</evidence>
<evidence type="ECO:0000255" key="2"/>
<evidence type="ECO:0000255" key="3">
    <source>
        <dbReference type="PROSITE-ProRule" id="PRU01084"/>
    </source>
</evidence>
<evidence type="ECO:0000305" key="4"/>
<feature type="chain" id="PRO_0000197598" description="Hexokinase">
    <location>
        <begin position="1"/>
        <end position="493"/>
    </location>
</feature>
<feature type="domain" description="Hexokinase" evidence="3">
    <location>
        <begin position="27"/>
        <end position="481"/>
    </location>
</feature>
<feature type="region of interest" description="Hexokinase small subdomain" evidence="3">
    <location>
        <begin position="91"/>
        <end position="239"/>
    </location>
</feature>
<feature type="region of interest" description="Glucose-binding" evidence="2">
    <location>
        <begin position="177"/>
        <end position="203"/>
    </location>
</feature>
<feature type="region of interest" description="Hexokinase large subdomain" evidence="3">
    <location>
        <begin position="240"/>
        <end position="470"/>
    </location>
</feature>
<feature type="binding site" evidence="2">
    <location>
        <begin position="102"/>
        <end position="107"/>
    </location>
    <ligand>
        <name>ATP</name>
        <dbReference type="ChEBI" id="CHEBI:30616"/>
    </ligand>
</feature>
<name>HXK_PLAFA</name>
<gene>
    <name type="primary">HK</name>
</gene>
<sequence>MSEYDIAKNDVTYTKLDTIECDIPINEELSWRINKFVNQLRISYSTLEEFVDNFVYELKKGLEAHRKHPNLWIPHECSFKMLDSCIANIPTGQEKGTYYAIDFGGTNFRAVRASLDGKGKIKRDQETYSLKFTGSYSHEKGLLDKHATASQLFDHFAERIKYIMGEFNDLDNKEVKSVGFTFSFPCTSPSINCSILIDWTKGFETGRATNDPVEGRDVCKLMNDAFVRAAIPAKVCCVLNDAVGTLMSCAYQKGRGTPPCYIGIILGTGSNGCYYEPEWKKYKYAGKIINIEFGNFDKDLPTSPIDLVMDWYSANRSRQLFEKMISGAYLGEIVRRFMVNVLQSACSKKMWISDSFNSESGSVVLNDTSKNFEDSRKVAKAAWDMDFTDEQIYVLRKICEAVYNRSAALARGTIAAIAKRIKIIEHSKFTCGVDGSLFVKNAWYCKRLQEHLKVILADKAENLIIIPADDGSGKGAAITAAVIALNADIPQLP</sequence>
<protein>
    <recommendedName>
        <fullName>Hexokinase</fullName>
        <ecNumber evidence="1">2.7.1.1</ecNumber>
    </recommendedName>
</protein>